<gene>
    <name evidence="9" type="primary">YCHF1</name>
    <name evidence="10" type="ordered locus">LOC_Os08g09940</name>
    <name evidence="12" type="ordered locus">Os08g0199300</name>
    <name evidence="13" type="ORF">OsJ_26368</name>
    <name evidence="11" type="ORF">OSJNBb0094P23.28</name>
</gene>
<reference key="1">
    <citation type="journal article" date="2005" name="Nature">
        <title>The map-based sequence of the rice genome.</title>
        <authorList>
            <consortium name="International rice genome sequencing project (IRGSP)"/>
        </authorList>
    </citation>
    <scope>NUCLEOTIDE SEQUENCE [LARGE SCALE GENOMIC DNA]</scope>
    <source>
        <strain>cv. Nipponbare</strain>
    </source>
</reference>
<reference key="2">
    <citation type="journal article" date="2008" name="Nucleic Acids Res.">
        <title>The rice annotation project database (RAP-DB): 2008 update.</title>
        <authorList>
            <consortium name="The rice annotation project (RAP)"/>
        </authorList>
    </citation>
    <scope>GENOME REANNOTATION</scope>
    <source>
        <strain>cv. Nipponbare</strain>
    </source>
</reference>
<reference key="3">
    <citation type="journal article" date="2013" name="Rice">
        <title>Improvement of the Oryza sativa Nipponbare reference genome using next generation sequence and optical map data.</title>
        <authorList>
            <person name="Kawahara Y."/>
            <person name="de la Bastide M."/>
            <person name="Hamilton J.P."/>
            <person name="Kanamori H."/>
            <person name="McCombie W.R."/>
            <person name="Ouyang S."/>
            <person name="Schwartz D.C."/>
            <person name="Tanaka T."/>
            <person name="Wu J."/>
            <person name="Zhou S."/>
            <person name="Childs K.L."/>
            <person name="Davidson R.M."/>
            <person name="Lin H."/>
            <person name="Quesada-Ocampo L."/>
            <person name="Vaillancourt B."/>
            <person name="Sakai H."/>
            <person name="Lee S.S."/>
            <person name="Kim J."/>
            <person name="Numa H."/>
            <person name="Itoh T."/>
            <person name="Buell C.R."/>
            <person name="Matsumoto T."/>
        </authorList>
    </citation>
    <scope>GENOME REANNOTATION</scope>
    <source>
        <strain>cv. Nipponbare</strain>
    </source>
</reference>
<reference key="4">
    <citation type="journal article" date="2005" name="PLoS Biol.">
        <title>The genomes of Oryza sativa: a history of duplications.</title>
        <authorList>
            <person name="Yu J."/>
            <person name="Wang J."/>
            <person name="Lin W."/>
            <person name="Li S."/>
            <person name="Li H."/>
            <person name="Zhou J."/>
            <person name="Ni P."/>
            <person name="Dong W."/>
            <person name="Hu S."/>
            <person name="Zeng C."/>
            <person name="Zhang J."/>
            <person name="Zhang Y."/>
            <person name="Li R."/>
            <person name="Xu Z."/>
            <person name="Li S."/>
            <person name="Li X."/>
            <person name="Zheng H."/>
            <person name="Cong L."/>
            <person name="Lin L."/>
            <person name="Yin J."/>
            <person name="Geng J."/>
            <person name="Li G."/>
            <person name="Shi J."/>
            <person name="Liu J."/>
            <person name="Lv H."/>
            <person name="Li J."/>
            <person name="Wang J."/>
            <person name="Deng Y."/>
            <person name="Ran L."/>
            <person name="Shi X."/>
            <person name="Wang X."/>
            <person name="Wu Q."/>
            <person name="Li C."/>
            <person name="Ren X."/>
            <person name="Wang J."/>
            <person name="Wang X."/>
            <person name="Li D."/>
            <person name="Liu D."/>
            <person name="Zhang X."/>
            <person name="Ji Z."/>
            <person name="Zhao W."/>
            <person name="Sun Y."/>
            <person name="Zhang Z."/>
            <person name="Bao J."/>
            <person name="Han Y."/>
            <person name="Dong L."/>
            <person name="Ji J."/>
            <person name="Chen P."/>
            <person name="Wu S."/>
            <person name="Liu J."/>
            <person name="Xiao Y."/>
            <person name="Bu D."/>
            <person name="Tan J."/>
            <person name="Yang L."/>
            <person name="Ye C."/>
            <person name="Zhang J."/>
            <person name="Xu J."/>
            <person name="Zhou Y."/>
            <person name="Yu Y."/>
            <person name="Zhang B."/>
            <person name="Zhuang S."/>
            <person name="Wei H."/>
            <person name="Liu B."/>
            <person name="Lei M."/>
            <person name="Yu H."/>
            <person name="Li Y."/>
            <person name="Xu H."/>
            <person name="Wei S."/>
            <person name="He X."/>
            <person name="Fang L."/>
            <person name="Zhang Z."/>
            <person name="Zhang Y."/>
            <person name="Huang X."/>
            <person name="Su Z."/>
            <person name="Tong W."/>
            <person name="Li J."/>
            <person name="Tong Z."/>
            <person name="Li S."/>
            <person name="Ye J."/>
            <person name="Wang L."/>
            <person name="Fang L."/>
            <person name="Lei T."/>
            <person name="Chen C.-S."/>
            <person name="Chen H.-C."/>
            <person name="Xu Z."/>
            <person name="Li H."/>
            <person name="Huang H."/>
            <person name="Zhang F."/>
            <person name="Xu H."/>
            <person name="Li N."/>
            <person name="Zhao C."/>
            <person name="Li S."/>
            <person name="Dong L."/>
            <person name="Huang Y."/>
            <person name="Li L."/>
            <person name="Xi Y."/>
            <person name="Qi Q."/>
            <person name="Li W."/>
            <person name="Zhang B."/>
            <person name="Hu W."/>
            <person name="Zhang Y."/>
            <person name="Tian X."/>
            <person name="Jiao Y."/>
            <person name="Liang X."/>
            <person name="Jin J."/>
            <person name="Gao L."/>
            <person name="Zheng W."/>
            <person name="Hao B."/>
            <person name="Liu S.-M."/>
            <person name="Wang W."/>
            <person name="Yuan L."/>
            <person name="Cao M."/>
            <person name="McDermott J."/>
            <person name="Samudrala R."/>
            <person name="Wang J."/>
            <person name="Wong G.K.-S."/>
            <person name="Yang H."/>
        </authorList>
    </citation>
    <scope>NUCLEOTIDE SEQUENCE [LARGE SCALE GENOMIC DNA]</scope>
    <source>
        <strain>cv. Nipponbare</strain>
    </source>
</reference>
<reference key="5">
    <citation type="journal article" date="2003" name="Science">
        <title>Collection, mapping, and annotation of over 28,000 cDNA clones from japonica rice.</title>
        <authorList>
            <consortium name="The rice full-length cDNA consortium"/>
        </authorList>
    </citation>
    <scope>NUCLEOTIDE SEQUENCE [LARGE SCALE MRNA]</scope>
    <source>
        <strain>cv. Nipponbare</strain>
    </source>
</reference>
<reference key="6">
    <citation type="journal article" date="2008" name="New Phytol.">
        <title>Constitutive expression of a rice GTPase-activating protein induces defense responses.</title>
        <authorList>
            <person name="Cheung M.-Y."/>
            <person name="Zeng N.-Y."/>
            <person name="Tong S.-W."/>
            <person name="Li W.-Y."/>
            <person name="Xue Y."/>
            <person name="Zhao K.-J."/>
            <person name="Wang C."/>
            <person name="Zhang Q."/>
            <person name="Fu Y."/>
            <person name="Sun Z."/>
            <person name="Sun S.-S."/>
            <person name="Lam H.-M."/>
        </authorList>
    </citation>
    <scope>FUNCTION</scope>
    <scope>INTERACTION WITH GAP1</scope>
    <scope>ACTIVITY REGULATION</scope>
    <source>
        <strain>cv. Aichi asahi</strain>
    </source>
</reference>
<reference key="7">
    <citation type="journal article" date="2010" name="J. Biol. Chem.">
        <title>An ancient P-loop GTPase in rice is regulated by a higher plant-specific regulatory protein.</title>
        <authorList>
            <person name="Cheung M.Y."/>
            <person name="Xue Y."/>
            <person name="Zhou L."/>
            <person name="Li M.W."/>
            <person name="Sun S.S."/>
            <person name="Lam H.M."/>
        </authorList>
    </citation>
    <scope>FUNCTION</scope>
    <scope>ACTIVITY REGULATION</scope>
    <scope>INTERACTION WITH GAP1</scope>
    <scope>SUBCELLULAR LOCATION</scope>
    <scope>DOMAIN</scope>
</reference>
<reference key="8">
    <citation type="journal article" date="2013" name="Plant Cell Environ.">
        <title>The unconventional P-loop NTPase OsYchF1 and its regulator OsGAP1 play opposite roles in salinity stress tolerance.</title>
        <authorList>
            <person name="Cheung M.-Y."/>
            <person name="Li M.-W."/>
            <person name="Yung Y.-L."/>
            <person name="Wen C.-Q."/>
            <person name="Lam H.-M."/>
        </authorList>
    </citation>
    <scope>FUNCTION</scope>
    <scope>INTERACTION WITH GAP1</scope>
    <scope>SUBCELLULAR LOCATION</scope>
</reference>
<reference key="9">
    <citation type="journal article" date="2015" name="J. Biol. Chem.">
        <title>Site-directed mutagenesis shows the significance of interactions with phospholipids and the G-protein OsYchF1 for the physiological functions of the rice GTPase-activating protein 1 (OsGAP1).</title>
        <authorList>
            <person name="Yung Y.L."/>
            <person name="Cheung M.Y."/>
            <person name="Miao R."/>
            <person name="Fong Y.H."/>
            <person name="Li K.P."/>
            <person name="Yu M.H."/>
            <person name="Chye M.L."/>
            <person name="Wong K.B."/>
            <person name="Lam H.M."/>
        </authorList>
    </citation>
    <scope>INTERACTION WITH GAP1</scope>
</reference>
<reference key="10">
    <citation type="journal article" date="2016" name="Proc. Natl. Acad. Sci. U.S.A.">
        <title>ATP binding by the P-loop NTPase OsYchF1 (an unconventional G protein) contributes to biotic but not abiotic stress responses.</title>
        <authorList>
            <person name="Cheung M.Y."/>
            <person name="Li X."/>
            <person name="Miao R."/>
            <person name="Fong Y.H."/>
            <person name="Li K.P."/>
            <person name="Yung Y.L."/>
            <person name="Yu M.H."/>
            <person name="Wong K.B."/>
            <person name="Chen Z."/>
            <person name="Lam H.M."/>
        </authorList>
    </citation>
    <scope>X-RAY CRYSTALLOGRAPHY (2.20 ANGSTROMS) IN COMPLEX WITH ATP AND GTP ANALOGS</scope>
    <scope>FUNCTION</scope>
    <scope>MUTAGENESIS OF 231-MET--GLU-233</scope>
</reference>
<proteinExistence type="evidence at protein level"/>
<name>OLA1_ORYSJ</name>
<feature type="chain" id="PRO_0000433307" description="Obg-like ATPase 1">
    <location>
        <begin position="1"/>
        <end position="394"/>
    </location>
</feature>
<feature type="domain" description="OBG-type G" evidence="2">
    <location>
        <begin position="25"/>
        <end position="282"/>
    </location>
</feature>
<feature type="domain" description="TGS" evidence="3">
    <location>
        <begin position="303"/>
        <end position="386"/>
    </location>
</feature>
<feature type="binding site" evidence="8 14">
    <location>
        <begin position="34"/>
        <end position="39"/>
    </location>
    <ligand>
        <name>ATP</name>
        <dbReference type="ChEBI" id="CHEBI:30616"/>
    </ligand>
</feature>
<feature type="binding site" evidence="8 15">
    <location>
        <begin position="34"/>
        <end position="39"/>
    </location>
    <ligand>
        <name>GTP</name>
        <dbReference type="ChEBI" id="CHEBI:37565"/>
    </ligand>
</feature>
<feature type="binding site" evidence="2">
    <location>
        <position position="38"/>
    </location>
    <ligand>
        <name>Mg(2+)</name>
        <dbReference type="ChEBI" id="CHEBI:18420"/>
    </ligand>
</feature>
<feature type="binding site" evidence="2">
    <location>
        <begin position="56"/>
        <end position="60"/>
    </location>
    <ligand>
        <name>ATP</name>
        <dbReference type="ChEBI" id="CHEBI:30616"/>
    </ligand>
</feature>
<feature type="binding site" evidence="2">
    <location>
        <position position="58"/>
    </location>
    <ligand>
        <name>Mg(2+)</name>
        <dbReference type="ChEBI" id="CHEBI:18420"/>
    </ligand>
</feature>
<feature type="binding site" evidence="2">
    <location>
        <begin position="94"/>
        <end position="97"/>
    </location>
    <ligand>
        <name>ATP</name>
        <dbReference type="ChEBI" id="CHEBI:30616"/>
    </ligand>
</feature>
<feature type="binding site" evidence="8 15">
    <location>
        <position position="129"/>
    </location>
    <ligand>
        <name>GTP</name>
        <dbReference type="ChEBI" id="CHEBI:37565"/>
    </ligand>
</feature>
<feature type="binding site" evidence="8 14">
    <location>
        <begin position="230"/>
        <end position="231"/>
    </location>
    <ligand>
        <name>ATP</name>
        <dbReference type="ChEBI" id="CHEBI:30616"/>
    </ligand>
</feature>
<feature type="binding site" evidence="8 15">
    <location>
        <position position="230"/>
    </location>
    <ligand>
        <name>GTP</name>
        <dbReference type="ChEBI" id="CHEBI:37565"/>
    </ligand>
</feature>
<feature type="binding site" evidence="1">
    <location>
        <position position="231"/>
    </location>
    <ligand>
        <name>ATP</name>
        <dbReference type="ChEBI" id="CHEBI:30616"/>
    </ligand>
</feature>
<feature type="binding site" evidence="2">
    <location>
        <begin position="263"/>
        <end position="265"/>
    </location>
    <ligand>
        <name>ATP</name>
        <dbReference type="ChEBI" id="CHEBI:30616"/>
    </ligand>
</feature>
<feature type="binding site" evidence="2">
    <location>
        <begin position="263"/>
        <end position="265"/>
    </location>
    <ligand>
        <name>GTP</name>
        <dbReference type="ChEBI" id="CHEBI:37565"/>
    </ligand>
</feature>
<feature type="mutagenesis site" description="Abolishes binding to ATP, but has no effect on binding to GTP." evidence="8">
    <original>MSE</original>
    <variation>KSD</variation>
    <location>
        <begin position="231"/>
        <end position="233"/>
    </location>
</feature>
<feature type="strand" evidence="16">
    <location>
        <begin position="27"/>
        <end position="30"/>
    </location>
</feature>
<feature type="strand" evidence="18">
    <location>
        <begin position="32"/>
        <end position="36"/>
    </location>
</feature>
<feature type="helix" evidence="16">
    <location>
        <begin position="37"/>
        <end position="46"/>
    </location>
</feature>
<feature type="helix" evidence="16">
    <location>
        <begin position="51"/>
        <end position="53"/>
    </location>
</feature>
<feature type="strand" evidence="16">
    <location>
        <begin position="63"/>
        <end position="67"/>
    </location>
</feature>
<feature type="helix" evidence="16">
    <location>
        <begin position="71"/>
        <end position="80"/>
    </location>
</feature>
<feature type="strand" evidence="16">
    <location>
        <begin position="83"/>
        <end position="86"/>
    </location>
</feature>
<feature type="strand" evidence="16">
    <location>
        <begin position="89"/>
        <end position="94"/>
    </location>
</feature>
<feature type="helix" evidence="17">
    <location>
        <begin position="96"/>
        <end position="98"/>
    </location>
</feature>
<feature type="strand" evidence="17">
    <location>
        <begin position="105"/>
        <end position="107"/>
    </location>
</feature>
<feature type="helix" evidence="16">
    <location>
        <begin position="110"/>
        <end position="116"/>
    </location>
</feature>
<feature type="strand" evidence="16">
    <location>
        <begin position="122"/>
        <end position="127"/>
    </location>
</feature>
<feature type="helix" evidence="16">
    <location>
        <begin position="143"/>
        <end position="175"/>
    </location>
</feature>
<feature type="helix" evidence="16">
    <location>
        <begin position="179"/>
        <end position="196"/>
    </location>
</feature>
<feature type="helix" evidence="16">
    <location>
        <begin position="201"/>
        <end position="203"/>
    </location>
</feature>
<feature type="helix" evidence="16">
    <location>
        <begin position="208"/>
        <end position="217"/>
    </location>
</feature>
<feature type="helix" evidence="16">
    <location>
        <begin position="220"/>
        <end position="222"/>
    </location>
</feature>
<feature type="strand" evidence="16">
    <location>
        <begin position="225"/>
        <end position="230"/>
    </location>
</feature>
<feature type="helix" evidence="16">
    <location>
        <begin position="233"/>
        <end position="238"/>
    </location>
</feature>
<feature type="helix" evidence="16">
    <location>
        <begin position="244"/>
        <end position="253"/>
    </location>
</feature>
<feature type="strand" evidence="16">
    <location>
        <begin position="259"/>
        <end position="262"/>
    </location>
</feature>
<feature type="helix" evidence="16">
    <location>
        <begin position="264"/>
        <end position="271"/>
    </location>
</feature>
<feature type="helix" evidence="16">
    <location>
        <begin position="275"/>
        <end position="285"/>
    </location>
</feature>
<feature type="helix" evidence="16">
    <location>
        <begin position="291"/>
        <end position="301"/>
    </location>
</feature>
<feature type="strand" evidence="16">
    <location>
        <begin position="304"/>
        <end position="321"/>
    </location>
</feature>
<feature type="helix" evidence="16">
    <location>
        <begin position="326"/>
        <end position="331"/>
    </location>
</feature>
<feature type="helix" evidence="16">
    <location>
        <begin position="335"/>
        <end position="339"/>
    </location>
</feature>
<feature type="strand" evidence="16">
    <location>
        <begin position="341"/>
        <end position="348"/>
    </location>
</feature>
<feature type="helix" evidence="16">
    <location>
        <begin position="349"/>
        <end position="355"/>
    </location>
</feature>
<feature type="helix" evidence="16">
    <location>
        <begin position="358"/>
        <end position="363"/>
    </location>
</feature>
<feature type="strand" evidence="16">
    <location>
        <begin position="368"/>
        <end position="370"/>
    </location>
</feature>
<feature type="strand" evidence="16">
    <location>
        <begin position="380"/>
        <end position="386"/>
    </location>
</feature>
<protein>
    <recommendedName>
        <fullName evidence="1">Obg-like ATPase 1</fullName>
        <ecNumber evidence="4">3.6.5.-</ecNumber>
    </recommendedName>
    <alternativeName>
        <fullName evidence="9">Ribosome-binding ATPase YchF</fullName>
        <shortName evidence="9">OsYchF1</shortName>
    </alternativeName>
</protein>
<organism>
    <name type="scientific">Oryza sativa subsp. japonica</name>
    <name type="common">Rice</name>
    <dbReference type="NCBI Taxonomy" id="39947"/>
    <lineage>
        <taxon>Eukaryota</taxon>
        <taxon>Viridiplantae</taxon>
        <taxon>Streptophyta</taxon>
        <taxon>Embryophyta</taxon>
        <taxon>Tracheophyta</taxon>
        <taxon>Spermatophyta</taxon>
        <taxon>Magnoliopsida</taxon>
        <taxon>Liliopsida</taxon>
        <taxon>Poales</taxon>
        <taxon>Poaceae</taxon>
        <taxon>BOP clade</taxon>
        <taxon>Oryzoideae</taxon>
        <taxon>Oryzeae</taxon>
        <taxon>Oryzinae</taxon>
        <taxon>Oryza</taxon>
        <taxon>Oryza sativa</taxon>
    </lineage>
</organism>
<dbReference type="EC" id="3.6.5.-" evidence="4"/>
<dbReference type="EMBL" id="AP005416">
    <property type="protein sequence ID" value="BAD03576.1"/>
    <property type="molecule type" value="Genomic_DNA"/>
</dbReference>
<dbReference type="EMBL" id="AP008214">
    <property type="protein sequence ID" value="BAF23120.2"/>
    <property type="molecule type" value="Genomic_DNA"/>
</dbReference>
<dbReference type="EMBL" id="AP014964">
    <property type="protein sequence ID" value="BAT04246.1"/>
    <property type="molecule type" value="Genomic_DNA"/>
</dbReference>
<dbReference type="EMBL" id="CM000145">
    <property type="protein sequence ID" value="EEE68206.1"/>
    <property type="molecule type" value="Genomic_DNA"/>
</dbReference>
<dbReference type="EMBL" id="AK062256">
    <property type="protein sequence ID" value="BAG88257.1"/>
    <property type="molecule type" value="mRNA"/>
</dbReference>
<dbReference type="EMBL" id="AK098917">
    <property type="protein sequence ID" value="BAG93810.1"/>
    <property type="molecule type" value="mRNA"/>
</dbReference>
<dbReference type="RefSeq" id="XP_015650773.1">
    <property type="nucleotide sequence ID" value="XM_015795287.1"/>
</dbReference>
<dbReference type="PDB" id="5EE0">
    <property type="method" value="X-ray"/>
    <property type="resolution" value="2.20 A"/>
    <property type="chains" value="A=1-394"/>
</dbReference>
<dbReference type="PDB" id="5EE1">
    <property type="method" value="X-ray"/>
    <property type="resolution" value="2.55 A"/>
    <property type="chains" value="A=1-394"/>
</dbReference>
<dbReference type="PDB" id="5EE3">
    <property type="method" value="X-ray"/>
    <property type="resolution" value="2.90 A"/>
    <property type="chains" value="A/B=1-394"/>
</dbReference>
<dbReference type="PDB" id="5EE9">
    <property type="method" value="X-ray"/>
    <property type="resolution" value="2.75 A"/>
    <property type="chains" value="A/B=1-394"/>
</dbReference>
<dbReference type="PDBsum" id="5EE0"/>
<dbReference type="PDBsum" id="5EE1"/>
<dbReference type="PDBsum" id="5EE3"/>
<dbReference type="PDBsum" id="5EE9"/>
<dbReference type="SMR" id="Q6Z1J6"/>
<dbReference type="FunCoup" id="Q6Z1J6">
    <property type="interactions" value="2329"/>
</dbReference>
<dbReference type="STRING" id="39947.Q6Z1J6"/>
<dbReference type="PaxDb" id="39947-Q6Z1J6"/>
<dbReference type="EnsemblPlants" id="Os08t0199300-01">
    <property type="protein sequence ID" value="Os08t0199300-01"/>
    <property type="gene ID" value="Os08g0199300"/>
</dbReference>
<dbReference type="Gramene" id="Os08t0199300-01">
    <property type="protein sequence ID" value="Os08t0199300-01"/>
    <property type="gene ID" value="Os08g0199300"/>
</dbReference>
<dbReference type="KEGG" id="dosa:Os08g0199300"/>
<dbReference type="eggNOG" id="KOG1491">
    <property type="taxonomic scope" value="Eukaryota"/>
</dbReference>
<dbReference type="HOGENOM" id="CLU_018395_1_0_1"/>
<dbReference type="InParanoid" id="Q6Z1J6"/>
<dbReference type="OMA" id="DFHDLCE"/>
<dbReference type="OrthoDB" id="424823at2759"/>
<dbReference type="EvolutionaryTrace" id="Q6Z1J6"/>
<dbReference type="Proteomes" id="UP000000763">
    <property type="component" value="Chromosome 8"/>
</dbReference>
<dbReference type="Proteomes" id="UP000007752">
    <property type="component" value="Chromosome 8"/>
</dbReference>
<dbReference type="Proteomes" id="UP000059680">
    <property type="component" value="Chromosome 8"/>
</dbReference>
<dbReference type="GO" id="GO:0005737">
    <property type="term" value="C:cytoplasm"/>
    <property type="evidence" value="ECO:0000318"/>
    <property type="project" value="GO_Central"/>
</dbReference>
<dbReference type="GO" id="GO:0005829">
    <property type="term" value="C:cytosol"/>
    <property type="evidence" value="ECO:0000314"/>
    <property type="project" value="UniProtKB"/>
</dbReference>
<dbReference type="GO" id="GO:0005886">
    <property type="term" value="C:plasma membrane"/>
    <property type="evidence" value="ECO:0007669"/>
    <property type="project" value="UniProtKB-SubCell"/>
</dbReference>
<dbReference type="GO" id="GO:0005524">
    <property type="term" value="F:ATP binding"/>
    <property type="evidence" value="ECO:0000314"/>
    <property type="project" value="UniProtKB"/>
</dbReference>
<dbReference type="GO" id="GO:0016887">
    <property type="term" value="F:ATP hydrolysis activity"/>
    <property type="evidence" value="ECO:0000314"/>
    <property type="project" value="UniProtKB"/>
</dbReference>
<dbReference type="GO" id="GO:0005525">
    <property type="term" value="F:GTP binding"/>
    <property type="evidence" value="ECO:0000314"/>
    <property type="project" value="UniProtKB"/>
</dbReference>
<dbReference type="GO" id="GO:0003924">
    <property type="term" value="F:GTPase activity"/>
    <property type="evidence" value="ECO:0000314"/>
    <property type="project" value="UniProtKB"/>
</dbReference>
<dbReference type="GO" id="GO:0046872">
    <property type="term" value="F:metal ion binding"/>
    <property type="evidence" value="ECO:0007669"/>
    <property type="project" value="UniProtKB-KW"/>
</dbReference>
<dbReference type="GO" id="GO:0043023">
    <property type="term" value="F:ribosomal large subunit binding"/>
    <property type="evidence" value="ECO:0007669"/>
    <property type="project" value="UniProtKB-UniRule"/>
</dbReference>
<dbReference type="GO" id="GO:1900425">
    <property type="term" value="P:negative regulation of defense response to bacterium"/>
    <property type="evidence" value="ECO:0000315"/>
    <property type="project" value="UniProtKB"/>
</dbReference>
<dbReference type="GO" id="GO:1901001">
    <property type="term" value="P:negative regulation of response to salt stress"/>
    <property type="evidence" value="ECO:0000315"/>
    <property type="project" value="UniProtKB"/>
</dbReference>
<dbReference type="GO" id="GO:0009651">
    <property type="term" value="P:response to salt stress"/>
    <property type="evidence" value="ECO:0000314"/>
    <property type="project" value="UniProtKB"/>
</dbReference>
<dbReference type="CDD" id="cd04867">
    <property type="entry name" value="TGS_YchF_OLA1"/>
    <property type="match status" value="1"/>
</dbReference>
<dbReference type="CDD" id="cd01900">
    <property type="entry name" value="YchF"/>
    <property type="match status" value="1"/>
</dbReference>
<dbReference type="FunFam" id="1.10.150.300:FF:000003">
    <property type="entry name" value="Obg-like ATPase 1"/>
    <property type="match status" value="1"/>
</dbReference>
<dbReference type="FunFam" id="3.10.20.30:FF:000001">
    <property type="entry name" value="Ribosome-binding ATPase YchF"/>
    <property type="match status" value="1"/>
</dbReference>
<dbReference type="Gene3D" id="3.10.20.30">
    <property type="match status" value="1"/>
</dbReference>
<dbReference type="Gene3D" id="3.40.50.300">
    <property type="entry name" value="P-loop containing nucleotide triphosphate hydrolases"/>
    <property type="match status" value="1"/>
</dbReference>
<dbReference type="Gene3D" id="1.10.150.300">
    <property type="entry name" value="TGS-like domain"/>
    <property type="match status" value="1"/>
</dbReference>
<dbReference type="HAMAP" id="MF_00944">
    <property type="entry name" value="YchF_OLA1_ATPase"/>
    <property type="match status" value="1"/>
</dbReference>
<dbReference type="InterPro" id="IPR004396">
    <property type="entry name" value="ATPase_YchF/OLA1"/>
</dbReference>
<dbReference type="InterPro" id="IPR012675">
    <property type="entry name" value="Beta-grasp_dom_sf"/>
</dbReference>
<dbReference type="InterPro" id="IPR031167">
    <property type="entry name" value="G_OBG"/>
</dbReference>
<dbReference type="InterPro" id="IPR006073">
    <property type="entry name" value="GTP-bd"/>
</dbReference>
<dbReference type="InterPro" id="IPR027417">
    <property type="entry name" value="P-loop_NTPase"/>
</dbReference>
<dbReference type="InterPro" id="IPR004095">
    <property type="entry name" value="TGS"/>
</dbReference>
<dbReference type="InterPro" id="IPR012676">
    <property type="entry name" value="TGS-like"/>
</dbReference>
<dbReference type="InterPro" id="IPR023192">
    <property type="entry name" value="TGS-like_dom_sf"/>
</dbReference>
<dbReference type="InterPro" id="IPR013029">
    <property type="entry name" value="YchF_C"/>
</dbReference>
<dbReference type="InterPro" id="IPR041706">
    <property type="entry name" value="YchF_N"/>
</dbReference>
<dbReference type="NCBIfam" id="TIGR00092">
    <property type="entry name" value="redox-regulated ATPase YchF"/>
    <property type="match status" value="1"/>
</dbReference>
<dbReference type="PANTHER" id="PTHR23305">
    <property type="entry name" value="OBG GTPASE FAMILY"/>
    <property type="match status" value="1"/>
</dbReference>
<dbReference type="PANTHER" id="PTHR23305:SF11">
    <property type="entry name" value="OBG-LIKE ATPASE 1"/>
    <property type="match status" value="1"/>
</dbReference>
<dbReference type="Pfam" id="PF01926">
    <property type="entry name" value="MMR_HSR1"/>
    <property type="match status" value="1"/>
</dbReference>
<dbReference type="Pfam" id="PF06071">
    <property type="entry name" value="YchF-GTPase_C"/>
    <property type="match status" value="1"/>
</dbReference>
<dbReference type="PIRSF" id="PIRSF006641">
    <property type="entry name" value="CHP00092"/>
    <property type="match status" value="1"/>
</dbReference>
<dbReference type="PRINTS" id="PR00326">
    <property type="entry name" value="GTP1OBG"/>
</dbReference>
<dbReference type="SUPFAM" id="SSF52540">
    <property type="entry name" value="P-loop containing nucleoside triphosphate hydrolases"/>
    <property type="match status" value="1"/>
</dbReference>
<dbReference type="SUPFAM" id="SSF81271">
    <property type="entry name" value="TGS-like"/>
    <property type="match status" value="1"/>
</dbReference>
<dbReference type="PROSITE" id="PS51710">
    <property type="entry name" value="G_OBG"/>
    <property type="match status" value="1"/>
</dbReference>
<dbReference type="PROSITE" id="PS51880">
    <property type="entry name" value="TGS"/>
    <property type="match status" value="1"/>
</dbReference>
<comment type="function">
    <text evidence="1 4 5 6 8">Hydrolyzes ATP, and can also hydrolyze GTP with lower efficiency. Has lower affinity for GTP (Potential). Exhibits GTPase activity (PubMed:19086295). Exhibits similar binding affinities and hydrolytic activities toward both GTP and ATP (PubMed:20876569, PubMed:26912459). Binds to the 26 S ribosomal RNA in vitro, but not to the 5.8 S or 18 S rRNA (PubMed:20876569). Confers sensitivity to salinity stress by suppressing the anti-oxidation enzymatic activities and increasing lipid peroxidation thus leading to the accumulation of reactive oxygen species (ROS) (PubMed:23550829).</text>
</comment>
<comment type="cofactor">
    <cofactor evidence="2">
        <name>Mg(2+)</name>
        <dbReference type="ChEBI" id="CHEBI:18420"/>
    </cofactor>
</comment>
<comment type="activity regulation">
    <text evidence="4 5">Activated by GAP1.</text>
</comment>
<comment type="subunit">
    <text evidence="1 4 5 6 7">Monomer (Potential). Interacts with GAP1.</text>
</comment>
<comment type="subcellular location">
    <subcellularLocation>
        <location evidence="5 6">Cell membrane</location>
    </subcellularLocation>
    <subcellularLocation>
        <location evidence="1">Cytoplasm</location>
    </subcellularLocation>
    <subcellularLocation>
        <location evidence="5 6">Cytoplasm</location>
        <location evidence="5 6">Cytosol</location>
    </subcellularLocation>
    <text evidence="5 6">Localized mainly in the cytosol under NaCl treatment, but translocates to the plasma membrane upon wounding.</text>
</comment>
<comment type="domain">
    <text evidence="5">The C-terminal domain is involved in RNA binding.</text>
</comment>
<comment type="similarity">
    <text evidence="1">Belongs to the TRAFAC class OBG-HflX-like GTPase superfamily. OBG GTPase family. YchF/OLA1 subfamily.</text>
</comment>
<accession>Q6Z1J6</accession>
<accession>A0A0P0XCP6</accession>
<accession>Q0J7E5</accession>
<keyword id="KW-0002">3D-structure</keyword>
<keyword id="KW-0067">ATP-binding</keyword>
<keyword id="KW-1003">Cell membrane</keyword>
<keyword id="KW-0963">Cytoplasm</keyword>
<keyword id="KW-0342">GTP-binding</keyword>
<keyword id="KW-0378">Hydrolase</keyword>
<keyword id="KW-0460">Magnesium</keyword>
<keyword id="KW-0472">Membrane</keyword>
<keyword id="KW-0479">Metal-binding</keyword>
<keyword id="KW-0547">Nucleotide-binding</keyword>
<keyword id="KW-1185">Reference proteome</keyword>
<evidence type="ECO:0000255" key="1">
    <source>
        <dbReference type="HAMAP-Rule" id="MF_03167"/>
    </source>
</evidence>
<evidence type="ECO:0000255" key="2">
    <source>
        <dbReference type="PROSITE-ProRule" id="PRU01047"/>
    </source>
</evidence>
<evidence type="ECO:0000255" key="3">
    <source>
        <dbReference type="PROSITE-ProRule" id="PRU01228"/>
    </source>
</evidence>
<evidence type="ECO:0000269" key="4">
    <source>
    </source>
</evidence>
<evidence type="ECO:0000269" key="5">
    <source>
    </source>
</evidence>
<evidence type="ECO:0000269" key="6">
    <source>
    </source>
</evidence>
<evidence type="ECO:0000269" key="7">
    <source>
    </source>
</evidence>
<evidence type="ECO:0000269" key="8">
    <source>
    </source>
</evidence>
<evidence type="ECO:0000303" key="9">
    <source>
    </source>
</evidence>
<evidence type="ECO:0000305" key="10"/>
<evidence type="ECO:0000312" key="11">
    <source>
        <dbReference type="EMBL" id="BAD03576.1"/>
    </source>
</evidence>
<evidence type="ECO:0000312" key="12">
    <source>
        <dbReference type="EMBL" id="BAF23120.2"/>
    </source>
</evidence>
<evidence type="ECO:0000312" key="13">
    <source>
        <dbReference type="EMBL" id="EEE68206.1"/>
    </source>
</evidence>
<evidence type="ECO:0007744" key="14">
    <source>
        <dbReference type="PDB" id="5EE3"/>
    </source>
</evidence>
<evidence type="ECO:0007744" key="15">
    <source>
        <dbReference type="PDB" id="5EE9"/>
    </source>
</evidence>
<evidence type="ECO:0007829" key="16">
    <source>
        <dbReference type="PDB" id="5EE0"/>
    </source>
</evidence>
<evidence type="ECO:0007829" key="17">
    <source>
        <dbReference type="PDB" id="5EE1"/>
    </source>
</evidence>
<evidence type="ECO:0007829" key="18">
    <source>
        <dbReference type="PDB" id="5EE9"/>
    </source>
</evidence>
<sequence length="394" mass="44333">MPPKASKKDAAPAERPILGRFSSHLKIGIVGLPNVGKSTFFNIVTKLSIPAENFPFCTIDPNEARVYVPDERFDWLCQLYKPKSEVSAYLEINDIAGLVRGAHAGEGLGNAFLSHIRAVDGIFHVLRAFEDKEVTHIDDSVDPVRDLETIGEELRLKDIEFVQNKIDDLEKSMKRSNDKQLKLEHELCEKVKAHLEDGKDVRFGDWKSADIEILNTFQLLTAKPVVYLVNMSEKDYQRKKNKFLPKIHAWVQEHGGETIIPFSCAFERLLADMPPDEAAKYCAENQIASVIPKIIKTGFAAIHLIYFFTAGPDEVKCWQIRRQTKAPQAAGTIHTDFERGFICAEVMKFDDLKELGSESAVKAAGKYRQEGKTYVVQDGDIIFFKFNVSGGGKK</sequence>